<dbReference type="EC" id="2.7.8.20" evidence="1"/>
<dbReference type="EMBL" id="CU928164">
    <property type="protein sequence ID" value="CAR20929.1"/>
    <property type="molecule type" value="Genomic_DNA"/>
</dbReference>
<dbReference type="RefSeq" id="WP_001292634.1">
    <property type="nucleotide sequence ID" value="NC_011750.1"/>
</dbReference>
<dbReference type="RefSeq" id="YP_002410682.1">
    <property type="nucleotide sequence ID" value="NC_011750.1"/>
</dbReference>
<dbReference type="SMR" id="B7NVC9"/>
<dbReference type="STRING" id="585057.ECIAI39_4832"/>
<dbReference type="KEGG" id="ect:ECIAI39_4832"/>
<dbReference type="PATRIC" id="fig|585057.6.peg.4991"/>
<dbReference type="HOGENOM" id="CLU_023986_1_0_6"/>
<dbReference type="UniPathway" id="UPA00637"/>
<dbReference type="Proteomes" id="UP000000749">
    <property type="component" value="Chromosome"/>
</dbReference>
<dbReference type="GO" id="GO:0005886">
    <property type="term" value="C:plasma membrane"/>
    <property type="evidence" value="ECO:0007669"/>
    <property type="project" value="UniProtKB-SubCell"/>
</dbReference>
<dbReference type="GO" id="GO:0008960">
    <property type="term" value="F:phosphatidylglycerol-membrane-oligosaccharide glycerophosphotransferase activity"/>
    <property type="evidence" value="ECO:0007669"/>
    <property type="project" value="UniProtKB-UniRule"/>
</dbReference>
<dbReference type="GO" id="GO:0009250">
    <property type="term" value="P:glucan biosynthetic process"/>
    <property type="evidence" value="ECO:0007669"/>
    <property type="project" value="UniProtKB-UniRule"/>
</dbReference>
<dbReference type="CDD" id="cd16015">
    <property type="entry name" value="LTA_synthase"/>
    <property type="match status" value="1"/>
</dbReference>
<dbReference type="FunFam" id="3.40.720.10:FF:000009">
    <property type="entry name" value="Phosphoglycerol transferase I"/>
    <property type="match status" value="1"/>
</dbReference>
<dbReference type="Gene3D" id="3.40.720.10">
    <property type="entry name" value="Alkaline Phosphatase, subunit A"/>
    <property type="match status" value="1"/>
</dbReference>
<dbReference type="HAMAP" id="MF_01070">
    <property type="entry name" value="MdoB_OpgB"/>
    <property type="match status" value="1"/>
</dbReference>
<dbReference type="InterPro" id="IPR017850">
    <property type="entry name" value="Alkaline_phosphatase_core_sf"/>
</dbReference>
<dbReference type="InterPro" id="IPR054288">
    <property type="entry name" value="DUF7024"/>
</dbReference>
<dbReference type="InterPro" id="IPR020881">
    <property type="entry name" value="OpgB"/>
</dbReference>
<dbReference type="InterPro" id="IPR050448">
    <property type="entry name" value="OpgB/LTA_synthase_biosynth"/>
</dbReference>
<dbReference type="InterPro" id="IPR000917">
    <property type="entry name" value="Sulfatase_N"/>
</dbReference>
<dbReference type="NCBIfam" id="NF003000">
    <property type="entry name" value="PRK03776.1"/>
    <property type="match status" value="1"/>
</dbReference>
<dbReference type="PANTHER" id="PTHR47371">
    <property type="entry name" value="LIPOTEICHOIC ACID SYNTHASE"/>
    <property type="match status" value="1"/>
</dbReference>
<dbReference type="PANTHER" id="PTHR47371:SF3">
    <property type="entry name" value="PHOSPHOGLYCEROL TRANSFERASE I"/>
    <property type="match status" value="1"/>
</dbReference>
<dbReference type="Pfam" id="PF22895">
    <property type="entry name" value="DUF7024"/>
    <property type="match status" value="1"/>
</dbReference>
<dbReference type="Pfam" id="PF00884">
    <property type="entry name" value="Sulfatase"/>
    <property type="match status" value="1"/>
</dbReference>
<dbReference type="SUPFAM" id="SSF53649">
    <property type="entry name" value="Alkaline phosphatase-like"/>
    <property type="match status" value="1"/>
</dbReference>
<proteinExistence type="inferred from homology"/>
<protein>
    <recommendedName>
        <fullName evidence="1">Phosphoglycerol transferase I</fullName>
        <ecNumber evidence="1">2.7.8.20</ecNumber>
    </recommendedName>
    <alternativeName>
        <fullName evidence="1">Phosphatidylglycerol--membrane-oligosaccharide glycerophosphotransferase</fullName>
    </alternativeName>
</protein>
<keyword id="KW-0997">Cell inner membrane</keyword>
<keyword id="KW-1003">Cell membrane</keyword>
<keyword id="KW-0472">Membrane</keyword>
<keyword id="KW-0808">Transferase</keyword>
<keyword id="KW-0812">Transmembrane</keyword>
<keyword id="KW-1133">Transmembrane helix</keyword>
<evidence type="ECO:0000255" key="1">
    <source>
        <dbReference type="HAMAP-Rule" id="MF_01070"/>
    </source>
</evidence>
<accession>B7NVC9</accession>
<comment type="function">
    <text evidence="1">Transfers a phosphoglycerol residue from phosphatidylglycerol to the membrane-bound nascent glucan backbones.</text>
</comment>
<comment type="catalytic activity">
    <reaction evidence="1">
        <text>a phosphatidylglycerol + a membrane-derived-oligosaccharide D-glucose = a 1,2-diacyl-sn-glycerol + a membrane-derived-oligosaccharide 6-(glycerophospho)-D-glucose.</text>
        <dbReference type="EC" id="2.7.8.20"/>
    </reaction>
</comment>
<comment type="pathway">
    <text evidence="1">Glycan metabolism; osmoregulated periplasmic glucan (OPG) biosynthesis.</text>
</comment>
<comment type="subcellular location">
    <subcellularLocation>
        <location evidence="1">Cell inner membrane</location>
        <topology evidence="1">Multi-pass membrane protein</topology>
    </subcellularLocation>
</comment>
<comment type="similarity">
    <text evidence="1">Belongs to the OpgB family.</text>
</comment>
<organism>
    <name type="scientific">Escherichia coli O7:K1 (strain IAI39 / ExPEC)</name>
    <dbReference type="NCBI Taxonomy" id="585057"/>
    <lineage>
        <taxon>Bacteria</taxon>
        <taxon>Pseudomonadati</taxon>
        <taxon>Pseudomonadota</taxon>
        <taxon>Gammaproteobacteria</taxon>
        <taxon>Enterobacterales</taxon>
        <taxon>Enterobacteriaceae</taxon>
        <taxon>Escherichia</taxon>
    </lineage>
</organism>
<gene>
    <name evidence="1" type="primary">mdoB</name>
    <name evidence="1" type="synonym">opgB</name>
    <name type="ordered locus">ECIAI39_4832</name>
</gene>
<name>OPGB_ECO7I</name>
<reference key="1">
    <citation type="journal article" date="2009" name="PLoS Genet.">
        <title>Organised genome dynamics in the Escherichia coli species results in highly diverse adaptive paths.</title>
        <authorList>
            <person name="Touchon M."/>
            <person name="Hoede C."/>
            <person name="Tenaillon O."/>
            <person name="Barbe V."/>
            <person name="Baeriswyl S."/>
            <person name="Bidet P."/>
            <person name="Bingen E."/>
            <person name="Bonacorsi S."/>
            <person name="Bouchier C."/>
            <person name="Bouvet O."/>
            <person name="Calteau A."/>
            <person name="Chiapello H."/>
            <person name="Clermont O."/>
            <person name="Cruveiller S."/>
            <person name="Danchin A."/>
            <person name="Diard M."/>
            <person name="Dossat C."/>
            <person name="Karoui M.E."/>
            <person name="Frapy E."/>
            <person name="Garry L."/>
            <person name="Ghigo J.M."/>
            <person name="Gilles A.M."/>
            <person name="Johnson J."/>
            <person name="Le Bouguenec C."/>
            <person name="Lescat M."/>
            <person name="Mangenot S."/>
            <person name="Martinez-Jehanne V."/>
            <person name="Matic I."/>
            <person name="Nassif X."/>
            <person name="Oztas S."/>
            <person name="Petit M.A."/>
            <person name="Pichon C."/>
            <person name="Rouy Z."/>
            <person name="Ruf C.S."/>
            <person name="Schneider D."/>
            <person name="Tourret J."/>
            <person name="Vacherie B."/>
            <person name="Vallenet D."/>
            <person name="Medigue C."/>
            <person name="Rocha E.P.C."/>
            <person name="Denamur E."/>
        </authorList>
    </citation>
    <scope>NUCLEOTIDE SEQUENCE [LARGE SCALE GENOMIC DNA]</scope>
    <source>
        <strain>IAI39 / ExPEC</strain>
    </source>
</reference>
<sequence length="763" mass="85474">MSELLSFALFLASVLIYAWKAGRNTWWFAATLTVLGLFVVLNITLFASDYFTGDGINDAVLYTLTNSLTGAGVSKYILPGIGIVLGLAAVFGALGWILRRRRHHPHHFGYSLLALLLALGSVDASPAFRQITELVKSQSRDGDPDFAAYYKEPSRTIPDPKLNLVYIYGESLERTYFDNEAFPDLTPELGALKNEGLDFSHTQQLPGTDYTIAGMVASQCGIPLFAPFEGNASASVSSFFPQNICLGDILKNSGYQNYFVQGANLRFAGKDVFLKSHGFDHLYGSEELKSVVADPHYRNDWGFYDDTVLDEAWKKFEELSRSGQRFSLFTLTVDTHHPDGFISRTCNRKKYDFDGKPNQSFSAVSCSQENIATFINKIKASPWFKDTVIVVSSDHLAMNNTAWKYLNKQDRNNLFFVIRGDKPQQETLAVKRNTMDNGATVLDILGGDNYLGLGRSSLSGQSMSEIFLNIKEKTLAWKPDIIRLWKFPKEMKEFTIDQQKNMIAFSGSHFRLPLLLRVSDKRVEPLPESEYSAPLRFQLADFAPRDNFVWVDRCYKMAQLWAPELALSTDWCVSQGQLGGQQIVQHVDKAIWKGKTAFKDTVIDMARYKGNVDTLKIVDNDIRYKADSFIFNVAGAPEEVKQFSGISRPESWGRWSNAQLGDEVKIEYKHPLPKKFDLVITAKAYGNNASRPIPVRVGNEEQTLVLGNEVTTTTLHFDNPTDADTLVIVPPEPVSTNEGNILGHSPRKLGIGMVEIKVVEREG</sequence>
<feature type="chain" id="PRO_1000136622" description="Phosphoglycerol transferase I">
    <location>
        <begin position="1"/>
        <end position="763"/>
    </location>
</feature>
<feature type="transmembrane region" description="Helical" evidence="1">
    <location>
        <begin position="1"/>
        <end position="21"/>
    </location>
</feature>
<feature type="transmembrane region" description="Helical" evidence="1">
    <location>
        <begin position="26"/>
        <end position="46"/>
    </location>
</feature>
<feature type="transmembrane region" description="Helical" evidence="1">
    <location>
        <begin position="77"/>
        <end position="97"/>
    </location>
</feature>
<feature type="transmembrane region" description="Helical" evidence="1">
    <location>
        <begin position="108"/>
        <end position="128"/>
    </location>
</feature>